<dbReference type="EC" id="4.6.1.-" evidence="4"/>
<dbReference type="EMBL" id="FJ171392">
    <property type="protein sequence ID" value="ACN48888.1"/>
    <property type="molecule type" value="mRNA"/>
</dbReference>
<dbReference type="SMR" id="C0JAV7"/>
<dbReference type="GO" id="GO:0005576">
    <property type="term" value="C:extracellular region"/>
    <property type="evidence" value="ECO:0007669"/>
    <property type="project" value="UniProtKB-SubCell"/>
</dbReference>
<dbReference type="GO" id="GO:0016829">
    <property type="term" value="F:lyase activity"/>
    <property type="evidence" value="ECO:0007669"/>
    <property type="project" value="UniProtKB-KW"/>
</dbReference>
<dbReference type="GO" id="GO:0046872">
    <property type="term" value="F:metal ion binding"/>
    <property type="evidence" value="ECO:0007669"/>
    <property type="project" value="UniProtKB-KW"/>
</dbReference>
<dbReference type="GO" id="GO:0008081">
    <property type="term" value="F:phosphoric diester hydrolase activity"/>
    <property type="evidence" value="ECO:0007669"/>
    <property type="project" value="InterPro"/>
</dbReference>
<dbReference type="GO" id="GO:0090729">
    <property type="term" value="F:toxin activity"/>
    <property type="evidence" value="ECO:0007669"/>
    <property type="project" value="UniProtKB-KW"/>
</dbReference>
<dbReference type="GO" id="GO:0031640">
    <property type="term" value="P:killing of cells of another organism"/>
    <property type="evidence" value="ECO:0007669"/>
    <property type="project" value="UniProtKB-KW"/>
</dbReference>
<dbReference type="GO" id="GO:0016042">
    <property type="term" value="P:lipid catabolic process"/>
    <property type="evidence" value="ECO:0007669"/>
    <property type="project" value="UniProtKB-KW"/>
</dbReference>
<dbReference type="CDD" id="cd08576">
    <property type="entry name" value="GDPD_like_SMaseD_PLD"/>
    <property type="match status" value="1"/>
</dbReference>
<dbReference type="Gene3D" id="3.20.20.190">
    <property type="entry name" value="Phosphatidylinositol (PI) phosphodiesterase"/>
    <property type="match status" value="1"/>
</dbReference>
<dbReference type="InterPro" id="IPR017946">
    <property type="entry name" value="PLC-like_Pdiesterase_TIM-brl"/>
</dbReference>
<dbReference type="Pfam" id="PF13653">
    <property type="entry name" value="GDPD_2"/>
    <property type="match status" value="1"/>
</dbReference>
<dbReference type="SUPFAM" id="SSF51695">
    <property type="entry name" value="PLC-like phosphodiesterases"/>
    <property type="match status" value="1"/>
</dbReference>
<accession>C0JAV7</accession>
<organism>
    <name type="scientific">Loxosceles apachea</name>
    <name type="common">Apache recluse spider</name>
    <dbReference type="NCBI Taxonomy" id="571518"/>
    <lineage>
        <taxon>Eukaryota</taxon>
        <taxon>Metazoa</taxon>
        <taxon>Ecdysozoa</taxon>
        <taxon>Arthropoda</taxon>
        <taxon>Chelicerata</taxon>
        <taxon>Arachnida</taxon>
        <taxon>Araneae</taxon>
        <taxon>Araneomorphae</taxon>
        <taxon>Haplogynae</taxon>
        <taxon>Scytodoidea</taxon>
        <taxon>Sicariidae</taxon>
        <taxon>Loxosceles</taxon>
    </lineage>
</organism>
<proteinExistence type="evidence at transcript level"/>
<sequence length="273" mass="30434">WIMGHMVNAIAQIDEFVNLGANSIETDVSFDSSANPEYTYHGVPCDCGRTCTKWEHFNEFLKGLRKATTPGDSKYHEKLVLVVFDLKTGSLYDNQASDAGKKLAKSLLQNYWNNGNNGGRAYIVLSIPNLAHYKLITGFKEALTSEGHPELMDKVGYDFSGNDDIGDVANAYKKAGVTGHVWQSDGITNCLLRGLDRVRKAVANRDSSNGYINKVYYWTVDKRQSTRDALDAGVDGIMTNYPDVIADVLNESAYKAKFRIASYDDNPWETFKN</sequence>
<name>A1KC_LOXAP</name>
<evidence type="ECO:0000250" key="1">
    <source>
        <dbReference type="UniProtKB" id="A0A0D4WTV1"/>
    </source>
</evidence>
<evidence type="ECO:0000250" key="2">
    <source>
        <dbReference type="UniProtKB" id="A0A0D4WV12"/>
    </source>
</evidence>
<evidence type="ECO:0000250" key="3">
    <source>
        <dbReference type="UniProtKB" id="P0CE80"/>
    </source>
</evidence>
<evidence type="ECO:0000250" key="4">
    <source>
        <dbReference type="UniProtKB" id="Q4ZFU2"/>
    </source>
</evidence>
<evidence type="ECO:0000250" key="5">
    <source>
        <dbReference type="UniProtKB" id="Q8I914"/>
    </source>
</evidence>
<evidence type="ECO:0000255" key="6"/>
<evidence type="ECO:0000303" key="7">
    <source>
    </source>
</evidence>
<evidence type="ECO:0000305" key="8"/>
<evidence type="ECO:0000305" key="9">
    <source>
    </source>
</evidence>
<reference key="1">
    <citation type="journal article" date="2009" name="Mol. Biol. Evol.">
        <title>Molecular evolution, functional variation, and proposed nomenclature of the gene family that includes sphingomyelinase D in sicariid spider venoms.</title>
        <authorList>
            <person name="Binford G.J."/>
            <person name="Bodner M.R."/>
            <person name="Cordes M.H."/>
            <person name="Baldwin K.L."/>
            <person name="Rynerson M.R."/>
            <person name="Burns S.N."/>
            <person name="Zobel-Thropp P.A."/>
        </authorList>
    </citation>
    <scope>NUCLEOTIDE SEQUENCE [MRNA]</scope>
    <scope>NOMENCLATURE</scope>
    <source>
        <tissue>Venom gland</tissue>
    </source>
</reference>
<keyword id="KW-0204">Cytolysis</keyword>
<keyword id="KW-1061">Dermonecrotic toxin</keyword>
<keyword id="KW-1015">Disulfide bond</keyword>
<keyword id="KW-0325">Glycoprotein</keyword>
<keyword id="KW-0354">Hemolysis</keyword>
<keyword id="KW-0442">Lipid degradation</keyword>
<keyword id="KW-0443">Lipid metabolism</keyword>
<keyword id="KW-0456">Lyase</keyword>
<keyword id="KW-0460">Magnesium</keyword>
<keyword id="KW-0479">Metal-binding</keyword>
<keyword id="KW-0964">Secreted</keyword>
<keyword id="KW-0800">Toxin</keyword>
<feature type="chain" id="PRO_0000392790" description="Dermonecrotic toxin LapSicTox-alphaIB1c">
    <location>
        <begin position="1" status="less than"/>
        <end position="273"/>
    </location>
</feature>
<feature type="active site" evidence="5">
    <location>
        <position position="5"/>
    </location>
</feature>
<feature type="active site" description="Nucleophile" evidence="5">
    <location>
        <position position="41"/>
    </location>
</feature>
<feature type="binding site" evidence="5">
    <location>
        <position position="25"/>
    </location>
    <ligand>
        <name>Mg(2+)</name>
        <dbReference type="ChEBI" id="CHEBI:18420"/>
    </ligand>
</feature>
<feature type="binding site" evidence="5">
    <location>
        <position position="27"/>
    </location>
    <ligand>
        <name>Mg(2+)</name>
        <dbReference type="ChEBI" id="CHEBI:18420"/>
    </ligand>
</feature>
<feature type="binding site" evidence="5">
    <location>
        <position position="85"/>
    </location>
    <ligand>
        <name>Mg(2+)</name>
        <dbReference type="ChEBI" id="CHEBI:18420"/>
    </ligand>
</feature>
<feature type="glycosylation site" description="N-linked (GlcNAc...) asparagine" evidence="6">
    <location>
        <position position="250"/>
    </location>
</feature>
<feature type="disulfide bond" evidence="3">
    <location>
        <begin position="45"/>
        <end position="51"/>
    </location>
</feature>
<feature type="disulfide bond" evidence="3">
    <location>
        <begin position="47"/>
        <end position="190"/>
    </location>
</feature>
<feature type="non-terminal residue">
    <location>
        <position position="1"/>
    </location>
</feature>
<comment type="function">
    <text evidence="1 3">Dermonecrotic toxins cleave the phosphodiester linkage between the phosphate and headgroup of certain phospholipids (sphingolipid and lysolipid substrates), forming an alcohol (often choline) and a cyclic phosphate (By similarity). This toxin acts on sphingomyelin (SM) (By similarity). It may also act on ceramide phosphoethanolamine (CPE), lysophosphatidylcholine (LPC) and lysophosphatidylethanolamine (LPE), but not on lysophosphatidylserine (LPS), and lysophosphatidylglycerol (LPG) (By similarity). It acts by transphosphatidylation, releasing exclusively cyclic phosphate products as second products (By similarity). Induces dermonecrosis, hemolysis, increased vascular permeability, edema, inflammatory response, and platelet aggregation (By similarity).</text>
</comment>
<comment type="catalytic activity">
    <reaction evidence="1">
        <text>an N-(acyl)-sphingosylphosphocholine = an N-(acyl)-sphingosyl-1,3-cyclic phosphate + choline</text>
        <dbReference type="Rhea" id="RHEA:60652"/>
        <dbReference type="ChEBI" id="CHEBI:15354"/>
        <dbReference type="ChEBI" id="CHEBI:64583"/>
        <dbReference type="ChEBI" id="CHEBI:143892"/>
    </reaction>
</comment>
<comment type="catalytic activity">
    <reaction evidence="1">
        <text>an N-(acyl)-sphingosylphosphoethanolamine = an N-(acyl)-sphingosyl-1,3-cyclic phosphate + ethanolamine</text>
        <dbReference type="Rhea" id="RHEA:60648"/>
        <dbReference type="ChEBI" id="CHEBI:57603"/>
        <dbReference type="ChEBI" id="CHEBI:143891"/>
        <dbReference type="ChEBI" id="CHEBI:143892"/>
    </reaction>
</comment>
<comment type="catalytic activity">
    <reaction evidence="1">
        <text>a 1-acyl-sn-glycero-3-phosphocholine = a 1-acyl-sn-glycero-2,3-cyclic phosphate + choline</text>
        <dbReference type="Rhea" id="RHEA:60700"/>
        <dbReference type="ChEBI" id="CHEBI:15354"/>
        <dbReference type="ChEBI" id="CHEBI:58168"/>
        <dbReference type="ChEBI" id="CHEBI:143947"/>
    </reaction>
</comment>
<comment type="catalytic activity">
    <reaction evidence="1">
        <text>a 1-acyl-sn-glycero-3-phosphoethanolamine = a 1-acyl-sn-glycero-2,3-cyclic phosphate + ethanolamine</text>
        <dbReference type="Rhea" id="RHEA:60704"/>
        <dbReference type="ChEBI" id="CHEBI:57603"/>
        <dbReference type="ChEBI" id="CHEBI:64381"/>
        <dbReference type="ChEBI" id="CHEBI:143947"/>
    </reaction>
</comment>
<comment type="cofactor">
    <cofactor evidence="5">
        <name>Mg(2+)</name>
        <dbReference type="ChEBI" id="CHEBI:18420"/>
    </cofactor>
    <text evidence="5">Binds 1 Mg(2+) ion per subunit.</text>
</comment>
<comment type="subcellular location">
    <subcellularLocation>
        <location evidence="9">Secreted</location>
    </subcellularLocation>
</comment>
<comment type="tissue specificity">
    <text evidence="9">Expressed by the venom gland.</text>
</comment>
<comment type="similarity">
    <text evidence="8">Belongs to the arthropod phospholipase D family. Class II subfamily.</text>
</comment>
<comment type="caution">
    <text evidence="1 2 4">The most common activity assay for dermonecrotic toxins detects enzymatic activity by monitoring choline release from substrate. Liberation of choline from sphingomyelin (SM) or lysophosphatidylcholine (LPC) is commonly assumed to result from substrate hydrolysis, giving either ceramide-1-phosphate (C1P) or lysophosphatidic acid (LPA), respectively, as a second product. However, two studies from Lajoie and colleagues (2013 and 2015) report the observation of exclusive formation of cyclic phosphate products as second products, resulting from intramolecular transphosphatidylation. Cyclic phosphates have vastly different biological properties from their monoester counterparts, and they may be relevant to the pathology of brown spider envenomation.</text>
</comment>
<protein>
    <recommendedName>
        <fullName evidence="7">Dermonecrotic toxin LapSicTox-alphaIB1c</fullName>
        <ecNumber evidence="4">4.6.1.-</ecNumber>
    </recommendedName>
    <alternativeName>
        <fullName>Phospholipase D</fullName>
        <shortName>PLD</shortName>
    </alternativeName>
    <alternativeName>
        <fullName>Sphingomyelin phosphodiesterase D</fullName>
        <shortName>SMD</shortName>
        <shortName>SMase D</shortName>
        <shortName>Sphingomyelinase D</shortName>
    </alternativeName>
</protein>